<evidence type="ECO:0000250" key="1"/>
<evidence type="ECO:0000250" key="2">
    <source>
        <dbReference type="UniProtKB" id="Q5VV43"/>
    </source>
</evidence>
<evidence type="ECO:0000255" key="3"/>
<evidence type="ECO:0000255" key="4">
    <source>
        <dbReference type="PROSITE-ProRule" id="PRU00341"/>
    </source>
</evidence>
<evidence type="ECO:0000256" key="5">
    <source>
        <dbReference type="SAM" id="MobiDB-lite"/>
    </source>
</evidence>
<evidence type="ECO:0000269" key="6">
    <source>
    </source>
</evidence>
<evidence type="ECO:0000269" key="7">
    <source>
    </source>
</evidence>
<keyword id="KW-1003">Cell membrane</keyword>
<keyword id="KW-0217">Developmental protein</keyword>
<keyword id="KW-0967">Endosome</keyword>
<keyword id="KW-0325">Glycoprotein</keyword>
<keyword id="KW-0472">Membrane</keyword>
<keyword id="KW-0524">Neurogenesis</keyword>
<keyword id="KW-1185">Reference proteome</keyword>
<keyword id="KW-0677">Repeat</keyword>
<keyword id="KW-0732">Signal</keyword>
<keyword id="KW-0812">Transmembrane</keyword>
<keyword id="KW-1133">Transmembrane helix</keyword>
<dbReference type="EMBL" id="AABR03104707">
    <property type="status" value="NOT_ANNOTATED_CDS"/>
    <property type="molecule type" value="Genomic_DNA"/>
</dbReference>
<dbReference type="RefSeq" id="NP_001183952.1">
    <property type="nucleotide sequence ID" value="NM_001197023.2"/>
</dbReference>
<dbReference type="RefSeq" id="XP_017456093.1">
    <property type="nucleotide sequence ID" value="XM_017600604.3"/>
</dbReference>
<dbReference type="RefSeq" id="XP_063132672.1">
    <property type="nucleotide sequence ID" value="XM_063276602.1"/>
</dbReference>
<dbReference type="SMR" id="P0CI71"/>
<dbReference type="FunCoup" id="P0CI71">
    <property type="interactions" value="1446"/>
</dbReference>
<dbReference type="STRING" id="10116.ENSRNOP00000024536"/>
<dbReference type="GlyGen" id="P0CI71">
    <property type="glycosylation" value="2 sites"/>
</dbReference>
<dbReference type="PaxDb" id="10116-ENSRNOP00000024536"/>
<dbReference type="Ensembl" id="ENSRNOT00000024536.7">
    <property type="protein sequence ID" value="ENSRNOP00000024536.6"/>
    <property type="gene ID" value="ENSRNOG00000018141.7"/>
</dbReference>
<dbReference type="GeneID" id="361244"/>
<dbReference type="KEGG" id="rno:361244"/>
<dbReference type="UCSC" id="RGD:1307443">
    <property type="organism name" value="rat"/>
</dbReference>
<dbReference type="AGR" id="RGD:1307443"/>
<dbReference type="CTD" id="9856"/>
<dbReference type="RGD" id="1307443">
    <property type="gene designation" value="RGD1307443"/>
</dbReference>
<dbReference type="eggNOG" id="ENOG502QR8M">
    <property type="taxonomic scope" value="Eukaryota"/>
</dbReference>
<dbReference type="GeneTree" id="ENSGT00940000161462"/>
<dbReference type="HOGENOM" id="CLU_009448_0_1_1"/>
<dbReference type="InParanoid" id="P0CI71"/>
<dbReference type="OMA" id="AFWMENL"/>
<dbReference type="OrthoDB" id="48180at9989"/>
<dbReference type="PhylomeDB" id="P0CI71"/>
<dbReference type="Reactome" id="R-RNO-8856825">
    <property type="pathway name" value="Cargo recognition for clathrin-mediated endocytosis"/>
</dbReference>
<dbReference type="Reactome" id="R-RNO-8856828">
    <property type="pathway name" value="Clathrin-mediated endocytosis"/>
</dbReference>
<dbReference type="PRO" id="PR:P0CI71"/>
<dbReference type="Proteomes" id="UP000002494">
    <property type="component" value="Chromosome 17"/>
</dbReference>
<dbReference type="Bgee" id="ENSRNOG00000018141">
    <property type="expression patterns" value="Expressed in frontal cortex and 8 other cell types or tissues"/>
</dbReference>
<dbReference type="GO" id="GO:0031410">
    <property type="term" value="C:cytoplasmic vesicle"/>
    <property type="evidence" value="ECO:0000318"/>
    <property type="project" value="GO_Central"/>
</dbReference>
<dbReference type="GO" id="GO:0005769">
    <property type="term" value="C:early endosome"/>
    <property type="evidence" value="ECO:0000266"/>
    <property type="project" value="RGD"/>
</dbReference>
<dbReference type="GO" id="GO:0031901">
    <property type="term" value="C:early endosome membrane"/>
    <property type="evidence" value="ECO:0007669"/>
    <property type="project" value="UniProtKB-SubCell"/>
</dbReference>
<dbReference type="GO" id="GO:0005886">
    <property type="term" value="C:plasma membrane"/>
    <property type="evidence" value="ECO:0000266"/>
    <property type="project" value="RGD"/>
</dbReference>
<dbReference type="GO" id="GO:0021954">
    <property type="term" value="P:central nervous system neuron development"/>
    <property type="evidence" value="ECO:0000266"/>
    <property type="project" value="RGD"/>
</dbReference>
<dbReference type="GO" id="GO:0033555">
    <property type="term" value="P:multicellular organismal response to stress"/>
    <property type="evidence" value="ECO:0000266"/>
    <property type="project" value="RGD"/>
</dbReference>
<dbReference type="GO" id="GO:0030517">
    <property type="term" value="P:negative regulation of axon extension"/>
    <property type="evidence" value="ECO:0000266"/>
    <property type="project" value="RGD"/>
</dbReference>
<dbReference type="GO" id="GO:0048692">
    <property type="term" value="P:negative regulation of axon extension involved in regeneration"/>
    <property type="evidence" value="ECO:0000266"/>
    <property type="project" value="RGD"/>
</dbReference>
<dbReference type="GO" id="GO:2000171">
    <property type="term" value="P:negative regulation of dendrite development"/>
    <property type="evidence" value="ECO:0000266"/>
    <property type="project" value="RGD"/>
</dbReference>
<dbReference type="GO" id="GO:0001764">
    <property type="term" value="P:neuron migration"/>
    <property type="evidence" value="ECO:0000266"/>
    <property type="project" value="RGD"/>
</dbReference>
<dbReference type="GO" id="GO:0060391">
    <property type="term" value="P:positive regulation of SMAD protein signal transduction"/>
    <property type="evidence" value="ECO:0000266"/>
    <property type="project" value="RGD"/>
</dbReference>
<dbReference type="GO" id="GO:0010996">
    <property type="term" value="P:response to auditory stimulus"/>
    <property type="evidence" value="ECO:0000266"/>
    <property type="project" value="RGD"/>
</dbReference>
<dbReference type="GO" id="GO:0007605">
    <property type="term" value="P:sensory perception of sound"/>
    <property type="evidence" value="ECO:0000266"/>
    <property type="project" value="RGD"/>
</dbReference>
<dbReference type="GO" id="GO:0021794">
    <property type="term" value="P:thalamus development"/>
    <property type="evidence" value="ECO:0000266"/>
    <property type="project" value="RGD"/>
</dbReference>
<dbReference type="GO" id="GO:0042297">
    <property type="term" value="P:vocal learning"/>
    <property type="evidence" value="ECO:0000266"/>
    <property type="project" value="RGD"/>
</dbReference>
<dbReference type="CDD" id="cd00146">
    <property type="entry name" value="PKD"/>
    <property type="match status" value="4"/>
</dbReference>
<dbReference type="FunFam" id="2.60.40.10:FF:000061">
    <property type="entry name" value="Dyslexia-associated protein KIAA0319 homolog"/>
    <property type="match status" value="2"/>
</dbReference>
<dbReference type="FunFam" id="2.60.40.10:FF:000258">
    <property type="entry name" value="Dyslexia-associated protein KIAA0319 homolog"/>
    <property type="match status" value="1"/>
</dbReference>
<dbReference type="FunFam" id="2.60.40.10:FF:000319">
    <property type="entry name" value="Dyslexia-associated protein KIAA0319 homolog"/>
    <property type="match status" value="1"/>
</dbReference>
<dbReference type="FunFam" id="2.60.40.10:FF:000257">
    <property type="entry name" value="Dyslexia-associated protein KIAA0319-like"/>
    <property type="match status" value="1"/>
</dbReference>
<dbReference type="Gene3D" id="2.60.40.10">
    <property type="entry name" value="Immunoglobulins"/>
    <property type="match status" value="5"/>
</dbReference>
<dbReference type="InterPro" id="IPR013783">
    <property type="entry name" value="Ig-like_fold"/>
</dbReference>
<dbReference type="InterPro" id="IPR029865">
    <property type="entry name" value="KIAA0319-like"/>
</dbReference>
<dbReference type="InterPro" id="IPR056502">
    <property type="entry name" value="KIAA0319-like_C"/>
</dbReference>
<dbReference type="InterPro" id="IPR013980">
    <property type="entry name" value="MANSC_dom"/>
</dbReference>
<dbReference type="InterPro" id="IPR011106">
    <property type="entry name" value="MANSC_N"/>
</dbReference>
<dbReference type="InterPro" id="IPR022409">
    <property type="entry name" value="PKD/Chitinase_dom"/>
</dbReference>
<dbReference type="InterPro" id="IPR035986">
    <property type="entry name" value="PKD_dom_sf"/>
</dbReference>
<dbReference type="PANTHER" id="PTHR46182:SF1">
    <property type="entry name" value="DYSLEXIA-ASSOCIATED PROTEIN KIAA0319"/>
    <property type="match status" value="1"/>
</dbReference>
<dbReference type="PANTHER" id="PTHR46182">
    <property type="entry name" value="FI19480P1"/>
    <property type="match status" value="1"/>
</dbReference>
<dbReference type="Pfam" id="PF22352">
    <property type="entry name" value="K319L-like_PKD"/>
    <property type="match status" value="5"/>
</dbReference>
<dbReference type="Pfam" id="PF23620">
    <property type="entry name" value="KIAA0319"/>
    <property type="match status" value="1"/>
</dbReference>
<dbReference type="Pfam" id="PF23597">
    <property type="entry name" value="KIAA0319_N"/>
    <property type="match status" value="1"/>
</dbReference>
<dbReference type="SMART" id="SM00765">
    <property type="entry name" value="MANEC"/>
    <property type="match status" value="1"/>
</dbReference>
<dbReference type="SMART" id="SM00089">
    <property type="entry name" value="PKD"/>
    <property type="match status" value="5"/>
</dbReference>
<dbReference type="SUPFAM" id="SSF49299">
    <property type="entry name" value="PKD domain"/>
    <property type="match status" value="4"/>
</dbReference>
<dbReference type="PROSITE" id="PS50986">
    <property type="entry name" value="MANSC"/>
    <property type="match status" value="1"/>
</dbReference>
<reference key="1">
    <citation type="journal article" date="2004" name="Nature">
        <title>Genome sequence of the Brown Norway rat yields insights into mammalian evolution.</title>
        <authorList>
            <person name="Gibbs R.A."/>
            <person name="Weinstock G.M."/>
            <person name="Metzker M.L."/>
            <person name="Muzny D.M."/>
            <person name="Sodergren E.J."/>
            <person name="Scherer S."/>
            <person name="Scott G."/>
            <person name="Steffen D."/>
            <person name="Worley K.C."/>
            <person name="Burch P.E."/>
            <person name="Okwuonu G."/>
            <person name="Hines S."/>
            <person name="Lewis L."/>
            <person name="Deramo C."/>
            <person name="Delgado O."/>
            <person name="Dugan-Rocha S."/>
            <person name="Miner G."/>
            <person name="Morgan M."/>
            <person name="Hawes A."/>
            <person name="Gill R."/>
            <person name="Holt R.A."/>
            <person name="Adams M.D."/>
            <person name="Amanatides P.G."/>
            <person name="Baden-Tillson H."/>
            <person name="Barnstead M."/>
            <person name="Chin S."/>
            <person name="Evans C.A."/>
            <person name="Ferriera S."/>
            <person name="Fosler C."/>
            <person name="Glodek A."/>
            <person name="Gu Z."/>
            <person name="Jennings D."/>
            <person name="Kraft C.L."/>
            <person name="Nguyen T."/>
            <person name="Pfannkoch C.M."/>
            <person name="Sitter C."/>
            <person name="Sutton G.G."/>
            <person name="Venter J.C."/>
            <person name="Woodage T."/>
            <person name="Smith D."/>
            <person name="Lee H.-M."/>
            <person name="Gustafson E."/>
            <person name="Cahill P."/>
            <person name="Kana A."/>
            <person name="Doucette-Stamm L."/>
            <person name="Weinstock K."/>
            <person name="Fechtel K."/>
            <person name="Weiss R.B."/>
            <person name="Dunn D.M."/>
            <person name="Green E.D."/>
            <person name="Blakesley R.W."/>
            <person name="Bouffard G.G."/>
            <person name="De Jong P.J."/>
            <person name="Osoegawa K."/>
            <person name="Zhu B."/>
            <person name="Marra M."/>
            <person name="Schein J."/>
            <person name="Bosdet I."/>
            <person name="Fjell C."/>
            <person name="Jones S."/>
            <person name="Krzywinski M."/>
            <person name="Mathewson C."/>
            <person name="Siddiqui A."/>
            <person name="Wye N."/>
            <person name="McPherson J."/>
            <person name="Zhao S."/>
            <person name="Fraser C.M."/>
            <person name="Shetty J."/>
            <person name="Shatsman S."/>
            <person name="Geer K."/>
            <person name="Chen Y."/>
            <person name="Abramzon S."/>
            <person name="Nierman W.C."/>
            <person name="Havlak P.H."/>
            <person name="Chen R."/>
            <person name="Durbin K.J."/>
            <person name="Egan A."/>
            <person name="Ren Y."/>
            <person name="Song X.-Z."/>
            <person name="Li B."/>
            <person name="Liu Y."/>
            <person name="Qin X."/>
            <person name="Cawley S."/>
            <person name="Cooney A.J."/>
            <person name="D'Souza L.M."/>
            <person name="Martin K."/>
            <person name="Wu J.Q."/>
            <person name="Gonzalez-Garay M.L."/>
            <person name="Jackson A.R."/>
            <person name="Kalafus K.J."/>
            <person name="McLeod M.P."/>
            <person name="Milosavljevic A."/>
            <person name="Virk D."/>
            <person name="Volkov A."/>
            <person name="Wheeler D.A."/>
            <person name="Zhang Z."/>
            <person name="Bailey J.A."/>
            <person name="Eichler E.E."/>
            <person name="Tuzun E."/>
            <person name="Birney E."/>
            <person name="Mongin E."/>
            <person name="Ureta-Vidal A."/>
            <person name="Woodwark C."/>
            <person name="Zdobnov E."/>
            <person name="Bork P."/>
            <person name="Suyama M."/>
            <person name="Torrents D."/>
            <person name="Alexandersson M."/>
            <person name="Trask B.J."/>
            <person name="Young J.M."/>
            <person name="Huang H."/>
            <person name="Wang H."/>
            <person name="Xing H."/>
            <person name="Daniels S."/>
            <person name="Gietzen D."/>
            <person name="Schmidt J."/>
            <person name="Stevens K."/>
            <person name="Vitt U."/>
            <person name="Wingrove J."/>
            <person name="Camara F."/>
            <person name="Mar Alba M."/>
            <person name="Abril J.F."/>
            <person name="Guigo R."/>
            <person name="Smit A."/>
            <person name="Dubchak I."/>
            <person name="Rubin E.M."/>
            <person name="Couronne O."/>
            <person name="Poliakov A."/>
            <person name="Huebner N."/>
            <person name="Ganten D."/>
            <person name="Goesele C."/>
            <person name="Hummel O."/>
            <person name="Kreitler T."/>
            <person name="Lee Y.-A."/>
            <person name="Monti J."/>
            <person name="Schulz H."/>
            <person name="Zimdahl H."/>
            <person name="Himmelbauer H."/>
            <person name="Lehrach H."/>
            <person name="Jacob H.J."/>
            <person name="Bromberg S."/>
            <person name="Gullings-Handley J."/>
            <person name="Jensen-Seaman M.I."/>
            <person name="Kwitek A.E."/>
            <person name="Lazar J."/>
            <person name="Pasko D."/>
            <person name="Tonellato P.J."/>
            <person name="Twigger S."/>
            <person name="Ponting C.P."/>
            <person name="Duarte J.M."/>
            <person name="Rice S."/>
            <person name="Goodstadt L."/>
            <person name="Beatson S.A."/>
            <person name="Emes R.D."/>
            <person name="Winter E.E."/>
            <person name="Webber C."/>
            <person name="Brandt P."/>
            <person name="Nyakatura G."/>
            <person name="Adetobi M."/>
            <person name="Chiaromonte F."/>
            <person name="Elnitski L."/>
            <person name="Eswara P."/>
            <person name="Hardison R.C."/>
            <person name="Hou M."/>
            <person name="Kolbe D."/>
            <person name="Makova K."/>
            <person name="Miller W."/>
            <person name="Nekrutenko A."/>
            <person name="Riemer C."/>
            <person name="Schwartz S."/>
            <person name="Taylor J."/>
            <person name="Yang S."/>
            <person name="Zhang Y."/>
            <person name="Lindpaintner K."/>
            <person name="Andrews T.D."/>
            <person name="Caccamo M."/>
            <person name="Clamp M."/>
            <person name="Clarke L."/>
            <person name="Curwen V."/>
            <person name="Durbin R.M."/>
            <person name="Eyras E."/>
            <person name="Searle S.M."/>
            <person name="Cooper G.M."/>
            <person name="Batzoglou S."/>
            <person name="Brudno M."/>
            <person name="Sidow A."/>
            <person name="Stone E.A."/>
            <person name="Payseur B.A."/>
            <person name="Bourque G."/>
            <person name="Lopez-Otin C."/>
            <person name="Puente X.S."/>
            <person name="Chakrabarti K."/>
            <person name="Chatterji S."/>
            <person name="Dewey C."/>
            <person name="Pachter L."/>
            <person name="Bray N."/>
            <person name="Yap V.B."/>
            <person name="Caspi A."/>
            <person name="Tesler G."/>
            <person name="Pevzner P.A."/>
            <person name="Haussler D."/>
            <person name="Roskin K.M."/>
            <person name="Baertsch R."/>
            <person name="Clawson H."/>
            <person name="Furey T.S."/>
            <person name="Hinrichs A.S."/>
            <person name="Karolchik D."/>
            <person name="Kent W.J."/>
            <person name="Rosenbloom K.R."/>
            <person name="Trumbower H."/>
            <person name="Weirauch M."/>
            <person name="Cooper D.N."/>
            <person name="Stenson P.D."/>
            <person name="Ma B."/>
            <person name="Brent M."/>
            <person name="Arumugam M."/>
            <person name="Shteynberg D."/>
            <person name="Copley R.R."/>
            <person name="Taylor M.S."/>
            <person name="Riethman H."/>
            <person name="Mudunuri U."/>
            <person name="Peterson J."/>
            <person name="Guyer M."/>
            <person name="Felsenfeld A."/>
            <person name="Old S."/>
            <person name="Mockrin S."/>
            <person name="Collins F.S."/>
        </authorList>
    </citation>
    <scope>NUCLEOTIDE SEQUENCE [LARGE SCALE GENOMIC DNA]</scope>
    <source>
        <strain>Brown Norway</strain>
    </source>
</reference>
<reference key="2">
    <citation type="journal article" date="2006" name="Hum. Mol. Genet.">
        <title>The chromosome 6p22 haplotype associated with dyslexia reduces the expression of KIAA0319, a novel gene involved in neuronal migration.</title>
        <authorList>
            <person name="Paracchini S."/>
            <person name="Thomas A."/>
            <person name="Castro S."/>
            <person name="Lai C."/>
            <person name="Paramasivam M."/>
            <person name="Wang Y."/>
            <person name="Keating B.J."/>
            <person name="Taylor J.M."/>
            <person name="Hacking D.F."/>
            <person name="Scerri T."/>
            <person name="Francks C."/>
            <person name="Richardson A.J."/>
            <person name="Wade-Martins R."/>
            <person name="Stein J.F."/>
            <person name="Knight J.C."/>
            <person name="Copp A.J."/>
            <person name="Loturco J."/>
            <person name="Monaco A.P."/>
        </authorList>
    </citation>
    <scope>FUNCTION</scope>
</reference>
<reference key="3">
    <citation type="journal article" date="2010" name="Cereb. Cortex">
        <title>The effect of variation in expression of the candidate dyslexia susceptibility gene homolog Kiaa0319 on neuronal migration and dendritic morphology in the rat.</title>
        <authorList>
            <person name="Peschansky V.J."/>
            <person name="Burbridge T.J."/>
            <person name="Volz A.J."/>
            <person name="Fiondella C."/>
            <person name="Wissner-Gross Z."/>
            <person name="Galaburda A.M."/>
            <person name="Lo Turco J.J."/>
            <person name="Rosen G.D."/>
        </authorList>
    </citation>
    <scope>FUNCTION</scope>
    <scope>DEVELOPMENTAL STAGE</scope>
</reference>
<protein>
    <recommendedName>
        <fullName>Dyslexia-associated protein KIAA0319 homolog</fullName>
    </recommendedName>
</protein>
<accession>P0CI71</accession>
<organism>
    <name type="scientific">Rattus norvegicus</name>
    <name type="common">Rat</name>
    <dbReference type="NCBI Taxonomy" id="10116"/>
    <lineage>
        <taxon>Eukaryota</taxon>
        <taxon>Metazoa</taxon>
        <taxon>Chordata</taxon>
        <taxon>Craniata</taxon>
        <taxon>Vertebrata</taxon>
        <taxon>Euteleostomi</taxon>
        <taxon>Mammalia</taxon>
        <taxon>Eutheria</taxon>
        <taxon>Euarchontoglires</taxon>
        <taxon>Glires</taxon>
        <taxon>Rodentia</taxon>
        <taxon>Myomorpha</taxon>
        <taxon>Muroidea</taxon>
        <taxon>Muridae</taxon>
        <taxon>Murinae</taxon>
        <taxon>Rattus</taxon>
    </lineage>
</organism>
<comment type="function">
    <text evidence="6 7">Involved in neuronal migration during development of the cerebral neocortex. May function in a cell autonomous and a non-cell autonomous manner and play a role in appropriate adhesion between migrating neurons and radial glial fibers. May also regulate growth and differentiation of dendrites.</text>
</comment>
<comment type="subunit">
    <text evidence="1">Homodimer. Interacts with AP2M1; required for clathrin-mediated endocytosis (By similarity).</text>
</comment>
<comment type="subcellular location">
    <subcellularLocation>
        <location evidence="2">Cell membrane</location>
        <topology evidence="2">Single-pass type I membrane protein</topology>
    </subcellularLocation>
    <subcellularLocation>
        <location evidence="2">Early endosome membrane</location>
        <topology evidence="2">Single-pass type I membrane protein</topology>
    </subcellularLocation>
</comment>
<comment type="tissue specificity">
    <text>Highly expressed during development in ventricular zone, intermediate zone, cortical plate, striatum, hippocampus, and brain stem.</text>
</comment>
<comment type="PTM">
    <text evidence="1">N-glycosylated.</text>
</comment>
<comment type="PTM">
    <text evidence="1">O-glycosylated.</text>
</comment>
<comment type="PTM">
    <text evidence="1">Shedding of the extracellular domain and intramembrane cleavage produce several proteolytic products. The intramembrane cleavage releases a soluble cytoplasmic polypeptide that translocates to the nucleolus (By similarity).</text>
</comment>
<name>K0319_RAT</name>
<sequence>MVSPPGVLSSLLLLAAMAGGSSQQCSEGRTYSDAIISPNLESIRIMRVSHTFSVGDCTAACCDLPSCDLAWWFEGSCYLVNCMRPENCEPRTTGPIRSYLTFVRRPVQRSGQLLDYGDMMLGRGSPSGAWGDSLEDLRKDLPFLGKDGGPEETAEYSDDYKELERGLLQPSNQQDPRGSAEYPDWSLLPSSDGDFNASATGDNSAASTEKLQDLTPYPLDQEQLQSLNESTWSPTPRHSEMSSMWPSSVTASPTEEGLEGEETLQLQEQPNNSSGKKVPMPSHNPSPASLESSPTTVEKSSIFTVTPWSRDPGTPTFPASTVLPGLISPSWPLSPTTSRTVKALAVSAGDNLVLTLPNGEAELKASVEPAPPADTAYTYEWSLMSHPVDFQGKIKQENKPTLHLSQLSVGLYAFRVAVSGENAFGEGYVNVTVMPAARINQPPVAIVSPQIQELSLPLTSALIDGSQSTDDAEIVSYHWEEVDGPFLGEAFLDDSPLLRLSNLDPGNYTFRLTITDSDGATNSTTAALIIRGSLDYPPVANAGPNQTITLPQNTIILNGNQSSDDHQIVLYEWFPDPGGESKEMVMQGAQTPYLHLSELQEGEYTFQLMVTDSSGQQSTALVTLTVQAENNQAPVAVAGPDKELVFPVQSAMLDGSRSSDDHGIVCYRWEHIRGPSAVEMENVDKAIATVTGLQVGTYHFRLTVRDQQGLSSTSTLTVAVKKENNSPPRAQAGGRHVLMLPNNSITLDGSRSTDDRGIVSYLWIRDGQSPAAGDIIGSSDNGAALQLTNLVEGVYTFHLLVTDSQGASDSDTAIVEVLPDPKKDGMVELILQVGVEQLTEQQKETLVRQLAVLLNVLDSDVKVLKIQAHTDVSTVIVFYVQSGSPFKVLRAADVARNLHKRLSKEKGAFLLFKVLRIDTAGCLLKCSGHGHCDPITKRCICSQLWMENLLQRYMWDGESNCEWSVFYVAALALTLTVLTGAVTWVCICCCRRRKRTKIRKKTKYTILDNMDEQERMELRPKYGIKHRSTEHNSSLMVSESEFESDQDTLFSQERMERGVLKGSLNGSARSGVSFGYYSKDR</sequence>
<feature type="signal peptide" evidence="3">
    <location>
        <begin position="1"/>
        <end position="22"/>
    </location>
</feature>
<feature type="chain" id="PRO_0000403479" description="Dyslexia-associated protein KIAA0319 homolog">
    <location>
        <begin position="23"/>
        <end position="1081"/>
    </location>
</feature>
<feature type="topological domain" description="Extracellular" evidence="3">
    <location>
        <begin position="23"/>
        <end position="964"/>
    </location>
</feature>
<feature type="transmembrane region" description="Helical" evidence="3">
    <location>
        <begin position="965"/>
        <end position="985"/>
    </location>
</feature>
<feature type="topological domain" description="Cytoplasmic" evidence="3">
    <location>
        <begin position="986"/>
        <end position="1081"/>
    </location>
</feature>
<feature type="domain" description="MANSC" evidence="4">
    <location>
        <begin position="23"/>
        <end position="99"/>
    </location>
</feature>
<feature type="domain" description="PKD 1">
    <location>
        <begin position="345"/>
        <end position="436"/>
    </location>
</feature>
<feature type="domain" description="PKD 2">
    <location>
        <begin position="444"/>
        <end position="533"/>
    </location>
</feature>
<feature type="domain" description="PKD 3">
    <location>
        <begin position="539"/>
        <end position="629"/>
    </location>
</feature>
<feature type="domain" description="PKD 4">
    <location>
        <begin position="630"/>
        <end position="723"/>
    </location>
</feature>
<feature type="domain" description="PKD 5">
    <location>
        <begin position="729"/>
        <end position="820"/>
    </location>
</feature>
<feature type="region of interest" description="Disordered" evidence="5">
    <location>
        <begin position="141"/>
        <end position="160"/>
    </location>
</feature>
<feature type="region of interest" description="Disordered" evidence="5">
    <location>
        <begin position="168"/>
        <end position="216"/>
    </location>
</feature>
<feature type="region of interest" description="Disordered" evidence="5">
    <location>
        <begin position="228"/>
        <end position="298"/>
    </location>
</feature>
<feature type="short sequence motif" description="Endocytosis signal">
    <location>
        <begin position="1004"/>
        <end position="1007"/>
    </location>
</feature>
<feature type="compositionally biased region" description="Polar residues" evidence="5">
    <location>
        <begin position="197"/>
        <end position="209"/>
    </location>
</feature>
<feature type="compositionally biased region" description="Polar residues" evidence="5">
    <location>
        <begin position="228"/>
        <end position="253"/>
    </location>
</feature>
<feature type="compositionally biased region" description="Polar residues" evidence="5">
    <location>
        <begin position="283"/>
        <end position="298"/>
    </location>
</feature>
<feature type="glycosylation site" description="N-linked (GlcNAc...) asparagine" evidence="3">
    <location>
        <position position="430"/>
    </location>
</feature>
<feature type="glycosylation site" description="N-linked (GlcNAc...) asparagine" evidence="3">
    <location>
        <position position="522"/>
    </location>
</feature>
<proteinExistence type="evidence at transcript level"/>